<name>XPO6_DICDI</name>
<feature type="chain" id="PRO_0000328553" description="Exportin-6">
    <location>
        <begin position="1"/>
        <end position="1047"/>
    </location>
</feature>
<feature type="domain" description="Importin N-terminal">
    <location>
        <begin position="32"/>
        <end position="98"/>
    </location>
</feature>
<dbReference type="EMBL" id="AAFI02000199">
    <property type="protein sequence ID" value="EAL60890.1"/>
    <property type="molecule type" value="Genomic_DNA"/>
</dbReference>
<dbReference type="RefSeq" id="XP_629307.1">
    <property type="nucleotide sequence ID" value="XM_629305.1"/>
</dbReference>
<dbReference type="SMR" id="Q54CB2"/>
<dbReference type="FunCoup" id="Q54CB2">
    <property type="interactions" value="268"/>
</dbReference>
<dbReference type="STRING" id="44689.Q54CB2"/>
<dbReference type="PaxDb" id="44689-DDB0237584"/>
<dbReference type="EnsemblProtists" id="EAL60890">
    <property type="protein sequence ID" value="EAL60890"/>
    <property type="gene ID" value="DDB_G0293076"/>
</dbReference>
<dbReference type="GeneID" id="8629030"/>
<dbReference type="KEGG" id="ddi:DDB_G0293076"/>
<dbReference type="dictyBase" id="DDB_G0293076">
    <property type="gene designation" value="xpo6"/>
</dbReference>
<dbReference type="VEuPathDB" id="AmoebaDB:DDB_G0293076"/>
<dbReference type="eggNOG" id="KOG2020">
    <property type="taxonomic scope" value="Eukaryota"/>
</dbReference>
<dbReference type="HOGENOM" id="CLU_004473_0_0_1"/>
<dbReference type="InParanoid" id="Q54CB2"/>
<dbReference type="OMA" id="KITRFNH"/>
<dbReference type="PhylomeDB" id="Q54CB2"/>
<dbReference type="PRO" id="PR:Q54CB2"/>
<dbReference type="Proteomes" id="UP000002195">
    <property type="component" value="Chromosome 6"/>
</dbReference>
<dbReference type="GO" id="GO:0005737">
    <property type="term" value="C:cytoplasm"/>
    <property type="evidence" value="ECO:0007669"/>
    <property type="project" value="UniProtKB-SubCell"/>
</dbReference>
<dbReference type="GO" id="GO:0005634">
    <property type="term" value="C:nucleus"/>
    <property type="evidence" value="ECO:0007669"/>
    <property type="project" value="UniProtKB-SubCell"/>
</dbReference>
<dbReference type="GO" id="GO:0005049">
    <property type="term" value="F:nuclear export signal receptor activity"/>
    <property type="evidence" value="ECO:0007669"/>
    <property type="project" value="InterPro"/>
</dbReference>
<dbReference type="GO" id="GO:0006611">
    <property type="term" value="P:protein export from nucleus"/>
    <property type="evidence" value="ECO:0000318"/>
    <property type="project" value="GO_Central"/>
</dbReference>
<dbReference type="FunFam" id="1.25.10.10:FF:001302">
    <property type="entry name" value="Exportin-6"/>
    <property type="match status" value="1"/>
</dbReference>
<dbReference type="Gene3D" id="1.25.10.10">
    <property type="entry name" value="Leucine-rich Repeat Variant"/>
    <property type="match status" value="1"/>
</dbReference>
<dbReference type="InterPro" id="IPR011989">
    <property type="entry name" value="ARM-like"/>
</dbReference>
<dbReference type="InterPro" id="IPR016024">
    <property type="entry name" value="ARM-type_fold"/>
</dbReference>
<dbReference type="InterPro" id="IPR013598">
    <property type="entry name" value="Exportin-1/Importin-b-like"/>
</dbReference>
<dbReference type="InterPro" id="IPR040016">
    <property type="entry name" value="XPO6"/>
</dbReference>
<dbReference type="PANTHER" id="PTHR21452">
    <property type="entry name" value="EXPORTIN-6"/>
    <property type="match status" value="1"/>
</dbReference>
<dbReference type="PANTHER" id="PTHR21452:SF4">
    <property type="entry name" value="EXPORTIN-6"/>
    <property type="match status" value="1"/>
</dbReference>
<dbReference type="Pfam" id="PF08389">
    <property type="entry name" value="Xpo1"/>
    <property type="match status" value="1"/>
</dbReference>
<dbReference type="SUPFAM" id="SSF48371">
    <property type="entry name" value="ARM repeat"/>
    <property type="match status" value="1"/>
</dbReference>
<keyword id="KW-0963">Cytoplasm</keyword>
<keyword id="KW-0539">Nucleus</keyword>
<keyword id="KW-0653">Protein transport</keyword>
<keyword id="KW-1185">Reference proteome</keyword>
<keyword id="KW-0813">Transport</keyword>
<comment type="function">
    <text evidence="1">Probably mediates the nuclear export of actin and profilin-actin complexes.</text>
</comment>
<comment type="subcellular location">
    <subcellularLocation>
        <location evidence="1">Nucleus</location>
    </subcellularLocation>
    <subcellularLocation>
        <location evidence="1">Cytoplasm</location>
    </subcellularLocation>
    <text evidence="1">Shuttles between the nucleus and the cytoplasm.</text>
</comment>
<comment type="similarity">
    <text evidence="2">Belongs to the exportin family.</text>
</comment>
<gene>
    <name type="primary">xpo6</name>
    <name type="ORF">DDB_G0293076</name>
</gene>
<reference key="1">
    <citation type="journal article" date="2005" name="Nature">
        <title>The genome of the social amoeba Dictyostelium discoideum.</title>
        <authorList>
            <person name="Eichinger L."/>
            <person name="Pachebat J.A."/>
            <person name="Gloeckner G."/>
            <person name="Rajandream M.A."/>
            <person name="Sucgang R."/>
            <person name="Berriman M."/>
            <person name="Song J."/>
            <person name="Olsen R."/>
            <person name="Szafranski K."/>
            <person name="Xu Q."/>
            <person name="Tunggal B."/>
            <person name="Kummerfeld S."/>
            <person name="Madera M."/>
            <person name="Konfortov B.A."/>
            <person name="Rivero F."/>
            <person name="Bankier A.T."/>
            <person name="Lehmann R."/>
            <person name="Hamlin N."/>
            <person name="Davies R."/>
            <person name="Gaudet P."/>
            <person name="Fey P."/>
            <person name="Pilcher K."/>
            <person name="Chen G."/>
            <person name="Saunders D."/>
            <person name="Sodergren E.J."/>
            <person name="Davis P."/>
            <person name="Kerhornou A."/>
            <person name="Nie X."/>
            <person name="Hall N."/>
            <person name="Anjard C."/>
            <person name="Hemphill L."/>
            <person name="Bason N."/>
            <person name="Farbrother P."/>
            <person name="Desany B."/>
            <person name="Just E."/>
            <person name="Morio T."/>
            <person name="Rost R."/>
            <person name="Churcher C.M."/>
            <person name="Cooper J."/>
            <person name="Haydock S."/>
            <person name="van Driessche N."/>
            <person name="Cronin A."/>
            <person name="Goodhead I."/>
            <person name="Muzny D.M."/>
            <person name="Mourier T."/>
            <person name="Pain A."/>
            <person name="Lu M."/>
            <person name="Harper D."/>
            <person name="Lindsay R."/>
            <person name="Hauser H."/>
            <person name="James K.D."/>
            <person name="Quiles M."/>
            <person name="Madan Babu M."/>
            <person name="Saito T."/>
            <person name="Buchrieser C."/>
            <person name="Wardroper A."/>
            <person name="Felder M."/>
            <person name="Thangavelu M."/>
            <person name="Johnson D."/>
            <person name="Knights A."/>
            <person name="Loulseged H."/>
            <person name="Mungall K.L."/>
            <person name="Oliver K."/>
            <person name="Price C."/>
            <person name="Quail M.A."/>
            <person name="Urushihara H."/>
            <person name="Hernandez J."/>
            <person name="Rabbinowitsch E."/>
            <person name="Steffen D."/>
            <person name="Sanders M."/>
            <person name="Ma J."/>
            <person name="Kohara Y."/>
            <person name="Sharp S."/>
            <person name="Simmonds M.N."/>
            <person name="Spiegler S."/>
            <person name="Tivey A."/>
            <person name="Sugano S."/>
            <person name="White B."/>
            <person name="Walker D."/>
            <person name="Woodward J.R."/>
            <person name="Winckler T."/>
            <person name="Tanaka Y."/>
            <person name="Shaulsky G."/>
            <person name="Schleicher M."/>
            <person name="Weinstock G.M."/>
            <person name="Rosenthal A."/>
            <person name="Cox E.C."/>
            <person name="Chisholm R.L."/>
            <person name="Gibbs R.A."/>
            <person name="Loomis W.F."/>
            <person name="Platzer M."/>
            <person name="Kay R.R."/>
            <person name="Williams J.G."/>
            <person name="Dear P.H."/>
            <person name="Noegel A.A."/>
            <person name="Barrell B.G."/>
            <person name="Kuspa A."/>
        </authorList>
    </citation>
    <scope>NUCLEOTIDE SEQUENCE [LARGE SCALE GENOMIC DNA]</scope>
    <source>
        <strain>AX4</strain>
    </source>
</reference>
<sequence>MNNNDMDQKAKELQNVLEQFYLTTDNPKRKEIDTILNNYKAQSDSYEHVQYYLVHSDNQYVIWFSLSVIEDKVNKAWNSISASSQTQTKGLLLDIYLNKTGANSNSTVKNVLPQFIISKLGQVIADIGRYEFESNPQSYLLNITSIVRNPSTSIRGINLLQCISDSFTTNKKVISQQKKTTLKKLLHQNSPIIIQVLVDCLGQLFDQNAEKKFKHANLLAFHVGSPDTNTYTASFNAESKNLTKAVFDALLSYFTWVPLSDLLVPSLFDILFKYLRLDKNSIPALECLNEIVSKNLVPKGFESFLMRIFHQVYSLLTDIVSNGGQQINQYHPEFLNKFTQFIQIFINNHLGRIETNPNFPIPDFLGLLFQYSFFQTQPESFLQCIDIWSTFLDYLINLSQENGTPPPSKYTDGLLLFQSELVKRILYIFNNNTLSELDDEDKEINENGISETQLESYIKKSIEVVAKVTELYPEKSLENLYPLFTQNVTSFFCKAEESIKQGVSMENEQQFQYLVKDVTTILHLFGRLADQFVVSFAQTFTAANFIFQKLLDMCLFSVNQYIYKFGSDWEKLQIELLCTIRSFCFWLAEYGNQVRAIVGQQPDFDSNITKLISIIVPLFERNAPESILSSAGKLLMSLATISKPLNLFTQMDMLISNIHNICAPLSPSIQSILYPAISCTILLPPSNVNLSQQWDQRRPKYSPFIKGITASFLEIPQIPNFVEGKIFCKEELIQRVLRVLKVVTAIIRTVPEVTQAKSILHDGIQDTLKVTLGLFRVYISYPIVLEAILDFFFVLFEFLKAQVGVVFTQQTISTFLDILGGDNLNQLLSSGNDTGISIIKKLIEILTFIVQQPGNSFESLLGSTIEFSMEKLYPMIANTSSVLRSPFFTLLYSILDNHWKQCQQIQINSILTSFQSIFKQNDVNLFKQNLDHFEKLNSKLKLYEKISSMEPVFGCSFISMFFDVLISDTQSVHTDDIIVTIYRFASLNFDKFFNEFFTTFLVQKNQLSNEQKQILRSNFSNAIDQPTFSTNMTQFINDFSYFSFINS</sequence>
<protein>
    <recommendedName>
        <fullName>Exportin-6</fullName>
        <shortName>Exp6</shortName>
    </recommendedName>
</protein>
<evidence type="ECO:0000250" key="1"/>
<evidence type="ECO:0000305" key="2"/>
<proteinExistence type="inferred from homology"/>
<accession>Q54CB2</accession>
<organism>
    <name type="scientific">Dictyostelium discoideum</name>
    <name type="common">Social amoeba</name>
    <dbReference type="NCBI Taxonomy" id="44689"/>
    <lineage>
        <taxon>Eukaryota</taxon>
        <taxon>Amoebozoa</taxon>
        <taxon>Evosea</taxon>
        <taxon>Eumycetozoa</taxon>
        <taxon>Dictyostelia</taxon>
        <taxon>Dictyosteliales</taxon>
        <taxon>Dictyosteliaceae</taxon>
        <taxon>Dictyostelium</taxon>
    </lineage>
</organism>